<evidence type="ECO:0000255" key="1">
    <source>
        <dbReference type="HAMAP-Rule" id="MF_00141"/>
    </source>
</evidence>
<reference key="1">
    <citation type="journal article" date="2009" name="Environ. Microbiol.">
        <title>Genome sequence of Desulfobacterium autotrophicum HRM2, a marine sulfate reducer oxidizing organic carbon completely to carbon dioxide.</title>
        <authorList>
            <person name="Strittmatter A.W."/>
            <person name="Liesegang H."/>
            <person name="Rabus R."/>
            <person name="Decker I."/>
            <person name="Amann J."/>
            <person name="Andres S."/>
            <person name="Henne A."/>
            <person name="Fricke W.F."/>
            <person name="Martinez-Arias R."/>
            <person name="Bartels D."/>
            <person name="Goesmann A."/>
            <person name="Krause L."/>
            <person name="Puehler A."/>
            <person name="Klenk H.P."/>
            <person name="Richter M."/>
            <person name="Schuler M."/>
            <person name="Gloeckner F.O."/>
            <person name="Meyerdierks A."/>
            <person name="Gottschalk G."/>
            <person name="Amann R."/>
        </authorList>
    </citation>
    <scope>NUCLEOTIDE SEQUENCE [LARGE SCALE GENOMIC DNA]</scope>
    <source>
        <strain>ATCC 43914 / DSM 3382 / VKM B-1955 / HRM2</strain>
    </source>
</reference>
<accession>C0QBX7</accession>
<dbReference type="EMBL" id="CP001087">
    <property type="protein sequence ID" value="ACN14989.1"/>
    <property type="molecule type" value="Genomic_DNA"/>
</dbReference>
<dbReference type="RefSeq" id="WP_015903775.1">
    <property type="nucleotide sequence ID" value="NC_012108.1"/>
</dbReference>
<dbReference type="SMR" id="C0QBX7"/>
<dbReference type="STRING" id="177437.HRM2_18880"/>
<dbReference type="KEGG" id="dat:HRM2_18880"/>
<dbReference type="eggNOG" id="COG0231">
    <property type="taxonomic scope" value="Bacteria"/>
</dbReference>
<dbReference type="HOGENOM" id="CLU_074944_0_1_7"/>
<dbReference type="OrthoDB" id="9801844at2"/>
<dbReference type="UniPathway" id="UPA00345"/>
<dbReference type="Proteomes" id="UP000000442">
    <property type="component" value="Chromosome"/>
</dbReference>
<dbReference type="GO" id="GO:0005737">
    <property type="term" value="C:cytoplasm"/>
    <property type="evidence" value="ECO:0007669"/>
    <property type="project" value="UniProtKB-SubCell"/>
</dbReference>
<dbReference type="GO" id="GO:0003746">
    <property type="term" value="F:translation elongation factor activity"/>
    <property type="evidence" value="ECO:0007669"/>
    <property type="project" value="UniProtKB-UniRule"/>
</dbReference>
<dbReference type="GO" id="GO:0043043">
    <property type="term" value="P:peptide biosynthetic process"/>
    <property type="evidence" value="ECO:0007669"/>
    <property type="project" value="InterPro"/>
</dbReference>
<dbReference type="CDD" id="cd04470">
    <property type="entry name" value="S1_EF-P_repeat_1"/>
    <property type="match status" value="1"/>
</dbReference>
<dbReference type="CDD" id="cd05794">
    <property type="entry name" value="S1_EF-P_repeat_2"/>
    <property type="match status" value="1"/>
</dbReference>
<dbReference type="FunFam" id="2.30.30.30:FF:000003">
    <property type="entry name" value="Elongation factor P"/>
    <property type="match status" value="1"/>
</dbReference>
<dbReference type="FunFam" id="2.40.50.140:FF:000004">
    <property type="entry name" value="Elongation factor P"/>
    <property type="match status" value="1"/>
</dbReference>
<dbReference type="FunFam" id="2.40.50.140:FF:000009">
    <property type="entry name" value="Elongation factor P"/>
    <property type="match status" value="1"/>
</dbReference>
<dbReference type="Gene3D" id="2.30.30.30">
    <property type="match status" value="1"/>
</dbReference>
<dbReference type="Gene3D" id="2.40.50.140">
    <property type="entry name" value="Nucleic acid-binding proteins"/>
    <property type="match status" value="2"/>
</dbReference>
<dbReference type="HAMAP" id="MF_00141">
    <property type="entry name" value="EF_P"/>
    <property type="match status" value="1"/>
</dbReference>
<dbReference type="InterPro" id="IPR015365">
    <property type="entry name" value="Elong-fact-P_C"/>
</dbReference>
<dbReference type="InterPro" id="IPR012340">
    <property type="entry name" value="NA-bd_OB-fold"/>
</dbReference>
<dbReference type="InterPro" id="IPR014722">
    <property type="entry name" value="Rib_uL2_dom2"/>
</dbReference>
<dbReference type="InterPro" id="IPR020599">
    <property type="entry name" value="Transl_elong_fac_P/YeiP"/>
</dbReference>
<dbReference type="InterPro" id="IPR013185">
    <property type="entry name" value="Transl_elong_KOW-like"/>
</dbReference>
<dbReference type="InterPro" id="IPR001059">
    <property type="entry name" value="Transl_elong_P/YeiP_cen"/>
</dbReference>
<dbReference type="InterPro" id="IPR013852">
    <property type="entry name" value="Transl_elong_P/YeiP_CS"/>
</dbReference>
<dbReference type="InterPro" id="IPR011768">
    <property type="entry name" value="Transl_elongation_fac_P"/>
</dbReference>
<dbReference type="InterPro" id="IPR008991">
    <property type="entry name" value="Translation_prot_SH3-like_sf"/>
</dbReference>
<dbReference type="NCBIfam" id="TIGR00038">
    <property type="entry name" value="efp"/>
    <property type="match status" value="1"/>
</dbReference>
<dbReference type="NCBIfam" id="NF001810">
    <property type="entry name" value="PRK00529.1"/>
    <property type="match status" value="1"/>
</dbReference>
<dbReference type="PANTHER" id="PTHR30053">
    <property type="entry name" value="ELONGATION FACTOR P"/>
    <property type="match status" value="1"/>
</dbReference>
<dbReference type="PANTHER" id="PTHR30053:SF12">
    <property type="entry name" value="ELONGATION FACTOR P (EF-P) FAMILY PROTEIN"/>
    <property type="match status" value="1"/>
</dbReference>
<dbReference type="Pfam" id="PF01132">
    <property type="entry name" value="EFP"/>
    <property type="match status" value="1"/>
</dbReference>
<dbReference type="Pfam" id="PF08207">
    <property type="entry name" value="EFP_N"/>
    <property type="match status" value="1"/>
</dbReference>
<dbReference type="Pfam" id="PF09285">
    <property type="entry name" value="Elong-fact-P_C"/>
    <property type="match status" value="1"/>
</dbReference>
<dbReference type="PIRSF" id="PIRSF005901">
    <property type="entry name" value="EF-P"/>
    <property type="match status" value="1"/>
</dbReference>
<dbReference type="SMART" id="SM01185">
    <property type="entry name" value="EFP"/>
    <property type="match status" value="1"/>
</dbReference>
<dbReference type="SMART" id="SM00841">
    <property type="entry name" value="Elong-fact-P_C"/>
    <property type="match status" value="1"/>
</dbReference>
<dbReference type="SUPFAM" id="SSF50249">
    <property type="entry name" value="Nucleic acid-binding proteins"/>
    <property type="match status" value="2"/>
</dbReference>
<dbReference type="SUPFAM" id="SSF50104">
    <property type="entry name" value="Translation proteins SH3-like domain"/>
    <property type="match status" value="1"/>
</dbReference>
<dbReference type="PROSITE" id="PS01275">
    <property type="entry name" value="EFP"/>
    <property type="match status" value="1"/>
</dbReference>
<feature type="chain" id="PRO_1000203264" description="Elongation factor P">
    <location>
        <begin position="1"/>
        <end position="187"/>
    </location>
</feature>
<proteinExistence type="inferred from homology"/>
<sequence>MYDASDLRKGLKFEIDGDPFVIVDFQFKKPGKGQALYKCKLRNMISGAQFERTFRSGDKFNEASLEEHDMEYLYSEGGNFCFMNSVSFEQEFLGKDQVGDAVNLLKDNTVCTVLFFNGKAIGLTLPNFVNLRIVQSDPWAKGDTATGSTKPATLETGYEIQVPPFVDEGQLVKIDTRTCEYVERVNE</sequence>
<organism>
    <name type="scientific">Desulforapulum autotrophicum (strain ATCC 43914 / DSM 3382 / VKM B-1955 / HRM2)</name>
    <name type="common">Desulfobacterium autotrophicum</name>
    <dbReference type="NCBI Taxonomy" id="177437"/>
    <lineage>
        <taxon>Bacteria</taxon>
        <taxon>Pseudomonadati</taxon>
        <taxon>Thermodesulfobacteriota</taxon>
        <taxon>Desulfobacteria</taxon>
        <taxon>Desulfobacterales</taxon>
        <taxon>Desulfobacteraceae</taxon>
        <taxon>Desulforapulum</taxon>
    </lineage>
</organism>
<protein>
    <recommendedName>
        <fullName evidence="1">Elongation factor P</fullName>
        <shortName evidence="1">EF-P</shortName>
    </recommendedName>
</protein>
<keyword id="KW-0963">Cytoplasm</keyword>
<keyword id="KW-0251">Elongation factor</keyword>
<keyword id="KW-0648">Protein biosynthesis</keyword>
<keyword id="KW-1185">Reference proteome</keyword>
<name>EFP_DESAH</name>
<gene>
    <name evidence="1" type="primary">efp</name>
    <name type="ordered locus">HRM2_18880</name>
</gene>
<comment type="function">
    <text evidence="1">Involved in peptide bond synthesis. Stimulates efficient translation and peptide-bond synthesis on native or reconstituted 70S ribosomes in vitro. Probably functions indirectly by altering the affinity of the ribosome for aminoacyl-tRNA, thus increasing their reactivity as acceptors for peptidyl transferase.</text>
</comment>
<comment type="pathway">
    <text evidence="1">Protein biosynthesis; polypeptide chain elongation.</text>
</comment>
<comment type="subcellular location">
    <subcellularLocation>
        <location evidence="1">Cytoplasm</location>
    </subcellularLocation>
</comment>
<comment type="similarity">
    <text evidence="1">Belongs to the elongation factor P family.</text>
</comment>